<dbReference type="EMBL" id="CP001628">
    <property type="protein sequence ID" value="ACS31199.1"/>
    <property type="molecule type" value="Genomic_DNA"/>
</dbReference>
<dbReference type="RefSeq" id="WP_010080387.1">
    <property type="nucleotide sequence ID" value="NC_012803.1"/>
</dbReference>
<dbReference type="SMR" id="C5CC58"/>
<dbReference type="STRING" id="465515.Mlut_17120"/>
<dbReference type="EnsemblBacteria" id="ACS31199">
    <property type="protein sequence ID" value="ACS31199"/>
    <property type="gene ID" value="Mlut_17120"/>
</dbReference>
<dbReference type="GeneID" id="93343579"/>
<dbReference type="KEGG" id="mlu:Mlut_17120"/>
<dbReference type="PATRIC" id="fig|465515.4.peg.1651"/>
<dbReference type="eggNOG" id="COG0185">
    <property type="taxonomic scope" value="Bacteria"/>
</dbReference>
<dbReference type="HOGENOM" id="CLU_144911_0_1_11"/>
<dbReference type="Proteomes" id="UP000000738">
    <property type="component" value="Chromosome"/>
</dbReference>
<dbReference type="GO" id="GO:0005737">
    <property type="term" value="C:cytoplasm"/>
    <property type="evidence" value="ECO:0007669"/>
    <property type="project" value="UniProtKB-ARBA"/>
</dbReference>
<dbReference type="GO" id="GO:0015935">
    <property type="term" value="C:small ribosomal subunit"/>
    <property type="evidence" value="ECO:0007669"/>
    <property type="project" value="InterPro"/>
</dbReference>
<dbReference type="GO" id="GO:0019843">
    <property type="term" value="F:rRNA binding"/>
    <property type="evidence" value="ECO:0007669"/>
    <property type="project" value="UniProtKB-UniRule"/>
</dbReference>
<dbReference type="GO" id="GO:0003735">
    <property type="term" value="F:structural constituent of ribosome"/>
    <property type="evidence" value="ECO:0007669"/>
    <property type="project" value="InterPro"/>
</dbReference>
<dbReference type="GO" id="GO:0000028">
    <property type="term" value="P:ribosomal small subunit assembly"/>
    <property type="evidence" value="ECO:0007669"/>
    <property type="project" value="TreeGrafter"/>
</dbReference>
<dbReference type="GO" id="GO:0006412">
    <property type="term" value="P:translation"/>
    <property type="evidence" value="ECO:0007669"/>
    <property type="project" value="UniProtKB-UniRule"/>
</dbReference>
<dbReference type="FunFam" id="3.30.860.10:FF:000001">
    <property type="entry name" value="30S ribosomal protein S19"/>
    <property type="match status" value="1"/>
</dbReference>
<dbReference type="Gene3D" id="3.30.860.10">
    <property type="entry name" value="30s Ribosomal Protein S19, Chain A"/>
    <property type="match status" value="1"/>
</dbReference>
<dbReference type="HAMAP" id="MF_00531">
    <property type="entry name" value="Ribosomal_uS19"/>
    <property type="match status" value="1"/>
</dbReference>
<dbReference type="InterPro" id="IPR002222">
    <property type="entry name" value="Ribosomal_uS19"/>
</dbReference>
<dbReference type="InterPro" id="IPR005732">
    <property type="entry name" value="Ribosomal_uS19_bac-type"/>
</dbReference>
<dbReference type="InterPro" id="IPR020934">
    <property type="entry name" value="Ribosomal_uS19_CS"/>
</dbReference>
<dbReference type="InterPro" id="IPR023575">
    <property type="entry name" value="Ribosomal_uS19_SF"/>
</dbReference>
<dbReference type="NCBIfam" id="TIGR01050">
    <property type="entry name" value="rpsS_bact"/>
    <property type="match status" value="1"/>
</dbReference>
<dbReference type="PANTHER" id="PTHR11880">
    <property type="entry name" value="RIBOSOMAL PROTEIN S19P FAMILY MEMBER"/>
    <property type="match status" value="1"/>
</dbReference>
<dbReference type="PANTHER" id="PTHR11880:SF8">
    <property type="entry name" value="SMALL RIBOSOMAL SUBUNIT PROTEIN US19M"/>
    <property type="match status" value="1"/>
</dbReference>
<dbReference type="Pfam" id="PF00203">
    <property type="entry name" value="Ribosomal_S19"/>
    <property type="match status" value="1"/>
</dbReference>
<dbReference type="PIRSF" id="PIRSF002144">
    <property type="entry name" value="Ribosomal_S19"/>
    <property type="match status" value="1"/>
</dbReference>
<dbReference type="PRINTS" id="PR00975">
    <property type="entry name" value="RIBOSOMALS19"/>
</dbReference>
<dbReference type="SUPFAM" id="SSF54570">
    <property type="entry name" value="Ribosomal protein S19"/>
    <property type="match status" value="1"/>
</dbReference>
<dbReference type="PROSITE" id="PS00323">
    <property type="entry name" value="RIBOSOMAL_S19"/>
    <property type="match status" value="1"/>
</dbReference>
<organism>
    <name type="scientific">Micrococcus luteus (strain ATCC 4698 / DSM 20030 / JCM 1464 / CCM 169 / CCUG 5858 / IAM 1056 / NBRC 3333 / NCIMB 9278 / NCTC 2665 / VKM Ac-2230)</name>
    <name type="common">Micrococcus lysodeikticus</name>
    <dbReference type="NCBI Taxonomy" id="465515"/>
    <lineage>
        <taxon>Bacteria</taxon>
        <taxon>Bacillati</taxon>
        <taxon>Actinomycetota</taxon>
        <taxon>Actinomycetes</taxon>
        <taxon>Micrococcales</taxon>
        <taxon>Micrococcaceae</taxon>
        <taxon>Micrococcus</taxon>
    </lineage>
</organism>
<reference key="1">
    <citation type="journal article" date="2010" name="J. Bacteriol.">
        <title>Genome sequence of the Fleming strain of Micrococcus luteus, a simple free-living actinobacterium.</title>
        <authorList>
            <person name="Young M."/>
            <person name="Artsatbanov V."/>
            <person name="Beller H.R."/>
            <person name="Chandra G."/>
            <person name="Chater K.F."/>
            <person name="Dover L.G."/>
            <person name="Goh E.B."/>
            <person name="Kahan T."/>
            <person name="Kaprelyants A.S."/>
            <person name="Kyrpides N."/>
            <person name="Lapidus A."/>
            <person name="Lowry S.R."/>
            <person name="Lykidis A."/>
            <person name="Mahillon J."/>
            <person name="Markowitz V."/>
            <person name="Mavromatis K."/>
            <person name="Mukamolova G.V."/>
            <person name="Oren A."/>
            <person name="Rokem J.S."/>
            <person name="Smith M.C."/>
            <person name="Young D.I."/>
            <person name="Greenblatt C.L."/>
        </authorList>
    </citation>
    <scope>NUCLEOTIDE SEQUENCE [LARGE SCALE GENOMIC DNA]</scope>
    <source>
        <strain>ATCC 4698 / DSM 20030 / JCM 1464 / CCM 169 / CCUG 5858 / IAM 1056 / NBRC 3333 / NCIMB 9278 / NCTC 2665 / VKM Ac-2230</strain>
    </source>
</reference>
<keyword id="KW-1185">Reference proteome</keyword>
<keyword id="KW-0687">Ribonucleoprotein</keyword>
<keyword id="KW-0689">Ribosomal protein</keyword>
<keyword id="KW-0694">RNA-binding</keyword>
<keyword id="KW-0699">rRNA-binding</keyword>
<protein>
    <recommendedName>
        <fullName evidence="1">Small ribosomal subunit protein uS19</fullName>
    </recommendedName>
    <alternativeName>
        <fullName evidence="2">30S ribosomal protein S19</fullName>
    </alternativeName>
</protein>
<name>RS19_MICLC</name>
<gene>
    <name evidence="1" type="primary">rpsS</name>
    <name type="ordered locus">Mlut_17120</name>
</gene>
<sequence>MPRSLKKGPFVDQHLYLKVLAENEKGSKNVIKTWSRRSMIIPDMLGHTIAVHDGRKHVPVFVTESMVGHKLGEFAPTRTFRGHVKDDKKGKRR</sequence>
<proteinExistence type="inferred from homology"/>
<comment type="function">
    <text evidence="1">Protein S19 forms a complex with S13 that binds strongly to the 16S ribosomal RNA.</text>
</comment>
<comment type="similarity">
    <text evidence="1">Belongs to the universal ribosomal protein uS19 family.</text>
</comment>
<evidence type="ECO:0000255" key="1">
    <source>
        <dbReference type="HAMAP-Rule" id="MF_00531"/>
    </source>
</evidence>
<evidence type="ECO:0000305" key="2"/>
<accession>C5CC58</accession>
<feature type="chain" id="PRO_1000211813" description="Small ribosomal subunit protein uS19">
    <location>
        <begin position="1"/>
        <end position="93"/>
    </location>
</feature>